<gene>
    <name evidence="2" type="primary">H1-8</name>
    <name evidence="7" type="synonym">H1FOO</name>
    <name type="synonym">H1OO</name>
</gene>
<accession>Q3HNG7</accession>
<feature type="chain" id="PRO_0000343411" description="Histone H1.8">
    <location>
        <begin position="1"/>
        <end position="343"/>
    </location>
</feature>
<feature type="domain" description="H15" evidence="4">
    <location>
        <begin position="52"/>
        <end position="130"/>
    </location>
</feature>
<feature type="region of interest" description="Disordered" evidence="5">
    <location>
        <begin position="1"/>
        <end position="50"/>
    </location>
</feature>
<feature type="region of interest" description="Disordered" evidence="5">
    <location>
        <begin position="122"/>
        <end position="343"/>
    </location>
</feature>
<feature type="short sequence motif" description="Nuclear localization signal" evidence="3">
    <location>
        <begin position="161"/>
        <end position="176"/>
    </location>
</feature>
<feature type="compositionally biased region" description="Low complexity" evidence="5">
    <location>
        <begin position="1"/>
        <end position="32"/>
    </location>
</feature>
<feature type="compositionally biased region" description="Basic residues" evidence="5">
    <location>
        <begin position="132"/>
        <end position="142"/>
    </location>
</feature>
<feature type="compositionally biased region" description="Basic and acidic residues" evidence="5">
    <location>
        <begin position="150"/>
        <end position="183"/>
    </location>
</feature>
<feature type="compositionally biased region" description="Basic and acidic residues" evidence="5">
    <location>
        <begin position="199"/>
        <end position="219"/>
    </location>
</feature>
<feature type="compositionally biased region" description="Basic and acidic residues" evidence="5">
    <location>
        <begin position="235"/>
        <end position="247"/>
    </location>
</feature>
<feature type="compositionally biased region" description="Polar residues" evidence="5">
    <location>
        <begin position="253"/>
        <end position="265"/>
    </location>
</feature>
<proteinExistence type="evidence at protein level"/>
<comment type="function">
    <text evidence="1 6">May play a key role in the control of gene expression during oogenesis and early embryogenesis, presumably through the perturbation of chromatin structure. Essential for meiotic maturation of germinal vesicle-stage oocytes. The somatic type linker histone H1c is rapidly replaced by H1oo in a donor nucleus transplanted into an oocyte. The greater mobility of H1oo as compared to H1c may contribute to this rapid replacement and increased instability of the embryonic chromatin structure. The rapid replacement of H1c with H1oo may play an important role in nuclear remodeling (By similarity).</text>
</comment>
<comment type="subcellular location">
    <subcellularLocation>
        <location evidence="6">Cytoplasm</location>
    </subcellularLocation>
    <subcellularLocation>
        <location evidence="4 6">Nucleus</location>
    </subcellularLocation>
    <subcellularLocation>
        <location evidence="4 6">Chromosome</location>
    </subcellularLocation>
    <text>In the 1-, 2- and 4-cell embryo, it is uniformly spread within the cytoplasm, while it is concentrated onto the chromatin in the nucleus. In the 8- to 16-cell embryo, its presence diminishes in the cytoplasm, although it is still strongly expressed in the nucleus.</text>
</comment>
<comment type="tissue specificity">
    <text evidence="6">Oocyte (at protein level).</text>
</comment>
<comment type="developmental stage">
    <text evidence="6">Found in the germinal vesicle (GV) oocyte and diminishes constantly throughout embryonic development. The levels compared to the initial amount found in the GV oocyte decreases to 41%, 28% and 7% in the 2, 4, and 8-cell embryos. In the 16-cell embryo and blastocyst, respectively, levels are 200 and 2000 times lower than in the GV oocyte.</text>
</comment>
<comment type="similarity">
    <text evidence="4">Belongs to the histone H1/H5 family.</text>
</comment>
<organism>
    <name type="scientific">Bos taurus</name>
    <name type="common">Bovine</name>
    <dbReference type="NCBI Taxonomy" id="9913"/>
    <lineage>
        <taxon>Eukaryota</taxon>
        <taxon>Metazoa</taxon>
        <taxon>Chordata</taxon>
        <taxon>Craniata</taxon>
        <taxon>Vertebrata</taxon>
        <taxon>Euteleostomi</taxon>
        <taxon>Mammalia</taxon>
        <taxon>Eutheria</taxon>
        <taxon>Laurasiatheria</taxon>
        <taxon>Artiodactyla</taxon>
        <taxon>Ruminantia</taxon>
        <taxon>Pecora</taxon>
        <taxon>Bovidae</taxon>
        <taxon>Bovinae</taxon>
        <taxon>Bos</taxon>
    </lineage>
</organism>
<sequence length="343" mass="35436">MAPGSIASSDTSSSTSSSSTSSASSASAEGSSRPLGSEKPGLARGAVRAPRRHPPVLRMVLEALQAGERRRGTSVAAIKVYILQKYPTVDALRLNHLLKQALATGLHRGLLIRPVNSKAKGATGSFKLVPKDKRKIPPRKTAPRMPGQAEGKDPKKPSESKKDPANTVEVKKGSRKPREERAAPSKPGAAKKAPKKGTQTKDPEPRLGEAKKSSRRPDKAAQAPPSAGGPGGKSKVKERGSRQADTKAHRKTQPGSQSSKSTVTKGENGAPLAKKKMGGKVPKEAAGEGPKAKAPVPPKGAGSKKEPGPLAGKAEASKGPRKPGIPTKSSVSKAASKKAEAEG</sequence>
<reference key="1">
    <citation type="journal article" date="2006" name="Mol. Reprod. Dev.">
        <title>Characterization of linker histone H1FOO during bovine in vitro embryo development.</title>
        <authorList>
            <person name="McGraw S."/>
            <person name="Vigneault C."/>
            <person name="Tremblay K."/>
            <person name="Sirard M.-A."/>
        </authorList>
    </citation>
    <scope>NUCLEOTIDE SEQUENCE [MRNA]</scope>
    <scope>FUNCTION</scope>
    <scope>SUBCELLULAR LOCATION</scope>
    <scope>TISSUE SPECIFICITY</scope>
    <scope>DEVELOPMENTAL STAGE</scope>
</reference>
<name>H18_BOVIN</name>
<protein>
    <recommendedName>
        <fullName evidence="8">Histone H1.8</fullName>
    </recommendedName>
    <alternativeName>
        <fullName>Histone H1oo</fullName>
    </alternativeName>
    <alternativeName>
        <fullName>Oocyte-specific histone H1</fullName>
    </alternativeName>
    <alternativeName>
        <fullName>Oocyte-specific linker histone H1</fullName>
    </alternativeName>
</protein>
<dbReference type="EMBL" id="DQ206443">
    <property type="protein sequence ID" value="ABA46814.1"/>
    <property type="molecule type" value="mRNA"/>
</dbReference>
<dbReference type="RefSeq" id="NP_001030449.1">
    <property type="nucleotide sequence ID" value="NM_001035372.1"/>
</dbReference>
<dbReference type="SMR" id="Q3HNG7"/>
<dbReference type="FunCoup" id="Q3HNG7">
    <property type="interactions" value="27"/>
</dbReference>
<dbReference type="STRING" id="9913.ENSBTAP00000002369"/>
<dbReference type="PaxDb" id="9913-ENSBTAP00000002369"/>
<dbReference type="GeneID" id="527400"/>
<dbReference type="KEGG" id="bta:527400"/>
<dbReference type="CTD" id="132243"/>
<dbReference type="eggNOG" id="KOG4012">
    <property type="taxonomic scope" value="Eukaryota"/>
</dbReference>
<dbReference type="InParanoid" id="Q3HNG7"/>
<dbReference type="OrthoDB" id="1110759at2759"/>
<dbReference type="Proteomes" id="UP000009136">
    <property type="component" value="Unplaced"/>
</dbReference>
<dbReference type="GO" id="GO:0005694">
    <property type="term" value="C:chromosome"/>
    <property type="evidence" value="ECO:0000314"/>
    <property type="project" value="UniProtKB"/>
</dbReference>
<dbReference type="GO" id="GO:0005737">
    <property type="term" value="C:cytoplasm"/>
    <property type="evidence" value="ECO:0007669"/>
    <property type="project" value="UniProtKB-SubCell"/>
</dbReference>
<dbReference type="GO" id="GO:0000786">
    <property type="term" value="C:nucleosome"/>
    <property type="evidence" value="ECO:0007669"/>
    <property type="project" value="InterPro"/>
</dbReference>
<dbReference type="GO" id="GO:0005634">
    <property type="term" value="C:nucleus"/>
    <property type="evidence" value="ECO:0000314"/>
    <property type="project" value="UniProtKB"/>
</dbReference>
<dbReference type="GO" id="GO:0003690">
    <property type="term" value="F:double-stranded DNA binding"/>
    <property type="evidence" value="ECO:0000318"/>
    <property type="project" value="GO_Central"/>
</dbReference>
<dbReference type="GO" id="GO:0031492">
    <property type="term" value="F:nucleosomal DNA binding"/>
    <property type="evidence" value="ECO:0000250"/>
    <property type="project" value="CAFA"/>
</dbReference>
<dbReference type="GO" id="GO:0030527">
    <property type="term" value="F:structural constituent of chromatin"/>
    <property type="evidence" value="ECO:0000314"/>
    <property type="project" value="GO_Central"/>
</dbReference>
<dbReference type="GO" id="GO:0030261">
    <property type="term" value="P:chromosome condensation"/>
    <property type="evidence" value="ECO:0000318"/>
    <property type="project" value="GO_Central"/>
</dbReference>
<dbReference type="GO" id="GO:0040029">
    <property type="term" value="P:epigenetic regulation of gene expression"/>
    <property type="evidence" value="ECO:0000250"/>
    <property type="project" value="CAFA"/>
</dbReference>
<dbReference type="GO" id="GO:0051321">
    <property type="term" value="P:meiotic cell cycle"/>
    <property type="evidence" value="ECO:0007669"/>
    <property type="project" value="UniProtKB-KW"/>
</dbReference>
<dbReference type="GO" id="GO:0045910">
    <property type="term" value="P:negative regulation of DNA recombination"/>
    <property type="evidence" value="ECO:0000318"/>
    <property type="project" value="GO_Central"/>
</dbReference>
<dbReference type="GO" id="GO:0006334">
    <property type="term" value="P:nucleosome assembly"/>
    <property type="evidence" value="ECO:0007669"/>
    <property type="project" value="InterPro"/>
</dbReference>
<dbReference type="CDD" id="cd00073">
    <property type="entry name" value="H15"/>
    <property type="match status" value="1"/>
</dbReference>
<dbReference type="FunFam" id="1.10.10.10:FF:000393">
    <property type="entry name" value="Oocyte-specific H1 histone"/>
    <property type="match status" value="1"/>
</dbReference>
<dbReference type="Gene3D" id="1.10.10.10">
    <property type="entry name" value="Winged helix-like DNA-binding domain superfamily/Winged helix DNA-binding domain"/>
    <property type="match status" value="1"/>
</dbReference>
<dbReference type="InterPro" id="IPR005818">
    <property type="entry name" value="Histone_H1/H5_H15"/>
</dbReference>
<dbReference type="InterPro" id="IPR036388">
    <property type="entry name" value="WH-like_DNA-bd_sf"/>
</dbReference>
<dbReference type="InterPro" id="IPR036390">
    <property type="entry name" value="WH_DNA-bd_sf"/>
</dbReference>
<dbReference type="Pfam" id="PF00538">
    <property type="entry name" value="Linker_histone"/>
    <property type="match status" value="1"/>
</dbReference>
<dbReference type="SMART" id="SM00526">
    <property type="entry name" value="H15"/>
    <property type="match status" value="1"/>
</dbReference>
<dbReference type="SUPFAM" id="SSF46785">
    <property type="entry name" value="Winged helix' DNA-binding domain"/>
    <property type="match status" value="1"/>
</dbReference>
<dbReference type="PROSITE" id="PS51504">
    <property type="entry name" value="H15"/>
    <property type="match status" value="1"/>
</dbReference>
<keyword id="KW-0158">Chromosome</keyword>
<keyword id="KW-0963">Cytoplasm</keyword>
<keyword id="KW-0238">DNA-binding</keyword>
<keyword id="KW-0469">Meiosis</keyword>
<keyword id="KW-0539">Nucleus</keyword>
<keyword id="KW-1185">Reference proteome</keyword>
<evidence type="ECO:0000250" key="1"/>
<evidence type="ECO:0000250" key="2">
    <source>
        <dbReference type="UniProtKB" id="Q8IZA3"/>
    </source>
</evidence>
<evidence type="ECO:0000255" key="3"/>
<evidence type="ECO:0000255" key="4">
    <source>
        <dbReference type="PROSITE-ProRule" id="PRU00837"/>
    </source>
</evidence>
<evidence type="ECO:0000256" key="5">
    <source>
        <dbReference type="SAM" id="MobiDB-lite"/>
    </source>
</evidence>
<evidence type="ECO:0000269" key="6">
    <source>
    </source>
</evidence>
<evidence type="ECO:0000303" key="7">
    <source>
    </source>
</evidence>
<evidence type="ECO:0000305" key="8"/>